<name>RS5_ECO57</name>
<sequence>MAHIEKQAGELQEKLIAVNRVSKTVKGGRIFSFTALTVVGDGNGRVGFGYGKAREVPAAIQKAMEKARRNMINVALNNGTLQHPVKGVHTGSRVFMQPASEGTGIIAGGAMRAVLEVAGVHNVLAKAYGSTNPINVVRATIDGLENMNSPEMVAAKRGKSVEEILGK</sequence>
<reference key="1">
    <citation type="journal article" date="2001" name="Nature">
        <title>Genome sequence of enterohaemorrhagic Escherichia coli O157:H7.</title>
        <authorList>
            <person name="Perna N.T."/>
            <person name="Plunkett G. III"/>
            <person name="Burland V."/>
            <person name="Mau B."/>
            <person name="Glasner J.D."/>
            <person name="Rose D.J."/>
            <person name="Mayhew G.F."/>
            <person name="Evans P.S."/>
            <person name="Gregor J."/>
            <person name="Kirkpatrick H.A."/>
            <person name="Posfai G."/>
            <person name="Hackett J."/>
            <person name="Klink S."/>
            <person name="Boutin A."/>
            <person name="Shao Y."/>
            <person name="Miller L."/>
            <person name="Grotbeck E.J."/>
            <person name="Davis N.W."/>
            <person name="Lim A."/>
            <person name="Dimalanta E.T."/>
            <person name="Potamousis K."/>
            <person name="Apodaca J."/>
            <person name="Anantharaman T.S."/>
            <person name="Lin J."/>
            <person name="Yen G."/>
            <person name="Schwartz D.C."/>
            <person name="Welch R.A."/>
            <person name="Blattner F.R."/>
        </authorList>
    </citation>
    <scope>NUCLEOTIDE SEQUENCE [LARGE SCALE GENOMIC DNA]</scope>
    <source>
        <strain>O157:H7 / EDL933 / ATCC 700927 / EHEC</strain>
    </source>
</reference>
<reference key="2">
    <citation type="journal article" date="2001" name="DNA Res.">
        <title>Complete genome sequence of enterohemorrhagic Escherichia coli O157:H7 and genomic comparison with a laboratory strain K-12.</title>
        <authorList>
            <person name="Hayashi T."/>
            <person name="Makino K."/>
            <person name="Ohnishi M."/>
            <person name="Kurokawa K."/>
            <person name="Ishii K."/>
            <person name="Yokoyama K."/>
            <person name="Han C.-G."/>
            <person name="Ohtsubo E."/>
            <person name="Nakayama K."/>
            <person name="Murata T."/>
            <person name="Tanaka M."/>
            <person name="Tobe T."/>
            <person name="Iida T."/>
            <person name="Takami H."/>
            <person name="Honda T."/>
            <person name="Sasakawa C."/>
            <person name="Ogasawara N."/>
            <person name="Yasunaga T."/>
            <person name="Kuhara S."/>
            <person name="Shiba T."/>
            <person name="Hattori M."/>
            <person name="Shinagawa H."/>
        </authorList>
    </citation>
    <scope>NUCLEOTIDE SEQUENCE [LARGE SCALE GENOMIC DNA]</scope>
    <source>
        <strain>O157:H7 / Sakai / RIMD 0509952 / EHEC</strain>
    </source>
</reference>
<protein>
    <recommendedName>
        <fullName evidence="2">Small ribosomal subunit protein uS5</fullName>
    </recommendedName>
    <alternativeName>
        <fullName>30S ribosomal protein S5</fullName>
    </alternativeName>
</protein>
<dbReference type="EMBL" id="AE005174">
    <property type="protein sequence ID" value="AAG58424.1"/>
    <property type="molecule type" value="Genomic_DNA"/>
</dbReference>
<dbReference type="EMBL" id="BA000007">
    <property type="protein sequence ID" value="BAB37591.1"/>
    <property type="molecule type" value="Genomic_DNA"/>
</dbReference>
<dbReference type="PIR" id="D85995">
    <property type="entry name" value="D85995"/>
</dbReference>
<dbReference type="PIR" id="H91149">
    <property type="entry name" value="H91149"/>
</dbReference>
<dbReference type="RefSeq" id="NP_312195.1">
    <property type="nucleotide sequence ID" value="NC_002695.1"/>
</dbReference>
<dbReference type="RefSeq" id="WP_000940121.1">
    <property type="nucleotide sequence ID" value="NZ_VOAI01000041.1"/>
</dbReference>
<dbReference type="EMDB" id="EMD-7014"/>
<dbReference type="EMDB" id="EMD-7015"/>
<dbReference type="EMDB" id="EMD-7016"/>
<dbReference type="EMDB" id="EMD-8621"/>
<dbReference type="EMDB" id="EMD-8826"/>
<dbReference type="EMDB" id="EMD-8829"/>
<dbReference type="SMR" id="P0A7W3"/>
<dbReference type="STRING" id="155864.Z4673"/>
<dbReference type="GeneID" id="915963"/>
<dbReference type="GeneID" id="93778684"/>
<dbReference type="KEGG" id="ece:Z4673"/>
<dbReference type="KEGG" id="ecs:ECs_4168"/>
<dbReference type="PATRIC" id="fig|386585.9.peg.4351"/>
<dbReference type="eggNOG" id="COG0098">
    <property type="taxonomic scope" value="Bacteria"/>
</dbReference>
<dbReference type="HOGENOM" id="CLU_065898_2_2_6"/>
<dbReference type="OMA" id="GIKDVWT"/>
<dbReference type="Proteomes" id="UP000000558">
    <property type="component" value="Chromosome"/>
</dbReference>
<dbReference type="Proteomes" id="UP000002519">
    <property type="component" value="Chromosome"/>
</dbReference>
<dbReference type="GO" id="GO:0015935">
    <property type="term" value="C:small ribosomal subunit"/>
    <property type="evidence" value="ECO:0007669"/>
    <property type="project" value="InterPro"/>
</dbReference>
<dbReference type="GO" id="GO:0019843">
    <property type="term" value="F:rRNA binding"/>
    <property type="evidence" value="ECO:0007669"/>
    <property type="project" value="UniProtKB-UniRule"/>
</dbReference>
<dbReference type="GO" id="GO:0003735">
    <property type="term" value="F:structural constituent of ribosome"/>
    <property type="evidence" value="ECO:0007669"/>
    <property type="project" value="InterPro"/>
</dbReference>
<dbReference type="GO" id="GO:0006412">
    <property type="term" value="P:translation"/>
    <property type="evidence" value="ECO:0007669"/>
    <property type="project" value="UniProtKB-UniRule"/>
</dbReference>
<dbReference type="FunFam" id="3.30.160.20:FF:000001">
    <property type="entry name" value="30S ribosomal protein S5"/>
    <property type="match status" value="1"/>
</dbReference>
<dbReference type="FunFam" id="3.30.230.10:FF:000002">
    <property type="entry name" value="30S ribosomal protein S5"/>
    <property type="match status" value="1"/>
</dbReference>
<dbReference type="Gene3D" id="3.30.160.20">
    <property type="match status" value="1"/>
</dbReference>
<dbReference type="Gene3D" id="3.30.230.10">
    <property type="match status" value="1"/>
</dbReference>
<dbReference type="HAMAP" id="MF_01307_B">
    <property type="entry name" value="Ribosomal_uS5_B"/>
    <property type="match status" value="1"/>
</dbReference>
<dbReference type="InterPro" id="IPR020568">
    <property type="entry name" value="Ribosomal_Su5_D2-typ_SF"/>
</dbReference>
<dbReference type="InterPro" id="IPR000851">
    <property type="entry name" value="Ribosomal_uS5"/>
</dbReference>
<dbReference type="InterPro" id="IPR005712">
    <property type="entry name" value="Ribosomal_uS5_bac-type"/>
</dbReference>
<dbReference type="InterPro" id="IPR005324">
    <property type="entry name" value="Ribosomal_uS5_C"/>
</dbReference>
<dbReference type="InterPro" id="IPR013810">
    <property type="entry name" value="Ribosomal_uS5_N"/>
</dbReference>
<dbReference type="InterPro" id="IPR018192">
    <property type="entry name" value="Ribosomal_uS5_N_CS"/>
</dbReference>
<dbReference type="InterPro" id="IPR014721">
    <property type="entry name" value="Ribsml_uS5_D2-typ_fold_subgr"/>
</dbReference>
<dbReference type="NCBIfam" id="TIGR01021">
    <property type="entry name" value="rpsE_bact"/>
    <property type="match status" value="1"/>
</dbReference>
<dbReference type="PANTHER" id="PTHR48277">
    <property type="entry name" value="MITOCHONDRIAL RIBOSOMAL PROTEIN S5"/>
    <property type="match status" value="1"/>
</dbReference>
<dbReference type="PANTHER" id="PTHR48277:SF1">
    <property type="entry name" value="MITOCHONDRIAL RIBOSOMAL PROTEIN S5"/>
    <property type="match status" value="1"/>
</dbReference>
<dbReference type="Pfam" id="PF00333">
    <property type="entry name" value="Ribosomal_S5"/>
    <property type="match status" value="1"/>
</dbReference>
<dbReference type="Pfam" id="PF03719">
    <property type="entry name" value="Ribosomal_S5_C"/>
    <property type="match status" value="1"/>
</dbReference>
<dbReference type="SUPFAM" id="SSF54768">
    <property type="entry name" value="dsRNA-binding domain-like"/>
    <property type="match status" value="1"/>
</dbReference>
<dbReference type="SUPFAM" id="SSF54211">
    <property type="entry name" value="Ribosomal protein S5 domain 2-like"/>
    <property type="match status" value="1"/>
</dbReference>
<dbReference type="PROSITE" id="PS00585">
    <property type="entry name" value="RIBOSOMAL_S5"/>
    <property type="match status" value="1"/>
</dbReference>
<dbReference type="PROSITE" id="PS50881">
    <property type="entry name" value="S5_DSRBD"/>
    <property type="match status" value="1"/>
</dbReference>
<proteinExistence type="inferred from homology"/>
<evidence type="ECO:0000250" key="1"/>
<evidence type="ECO:0000305" key="2"/>
<gene>
    <name type="primary">rpsE</name>
    <name type="ordered locus">Z4673</name>
    <name type="ordered locus">ECs4168</name>
</gene>
<feature type="initiator methionine" description="Removed" evidence="1">
    <location>
        <position position="1"/>
    </location>
</feature>
<feature type="chain" id="PRO_0000131513" description="Small ribosomal subunit protein uS5">
    <location>
        <begin position="2"/>
        <end position="167"/>
    </location>
</feature>
<feature type="domain" description="S5 DRBM">
    <location>
        <begin position="11"/>
        <end position="74"/>
    </location>
</feature>
<feature type="modified residue" description="N-acetylalanine" evidence="1">
    <location>
        <position position="2"/>
    </location>
</feature>
<keyword id="KW-0007">Acetylation</keyword>
<keyword id="KW-1185">Reference proteome</keyword>
<keyword id="KW-0687">Ribonucleoprotein</keyword>
<keyword id="KW-0689">Ribosomal protein</keyword>
<keyword id="KW-0694">RNA-binding</keyword>
<keyword id="KW-0699">rRNA-binding</keyword>
<comment type="function">
    <text evidence="1">With S4 and S12 plays an important role in translational accuracy.</text>
</comment>
<comment type="function">
    <text evidence="1">Located at the back of the 30S subunit body where it stabilizes the conformation of the head with respect to the body.</text>
</comment>
<comment type="subunit">
    <text evidence="1">Part of the 30S ribosomal subunit. Contacts proteins S4 and S8 (By similarity).</text>
</comment>
<comment type="domain">
    <text>The N-terminal domain interacts with the head of the 30S subunit; the C-terminal domain interacts with the body and contacts protein S4. The interaction surface between S4 and S5 is involved in control of translational fidelity.</text>
</comment>
<comment type="similarity">
    <text evidence="2">Belongs to the universal ribosomal protein uS5 family.</text>
</comment>
<accession>P0A7W3</accession>
<accession>O54299</accession>
<accession>P02356</accession>
<organism>
    <name type="scientific">Escherichia coli O157:H7</name>
    <dbReference type="NCBI Taxonomy" id="83334"/>
    <lineage>
        <taxon>Bacteria</taxon>
        <taxon>Pseudomonadati</taxon>
        <taxon>Pseudomonadota</taxon>
        <taxon>Gammaproteobacteria</taxon>
        <taxon>Enterobacterales</taxon>
        <taxon>Enterobacteriaceae</taxon>
        <taxon>Escherichia</taxon>
    </lineage>
</organism>